<dbReference type="EC" id="5.3.1.4" evidence="1"/>
<dbReference type="EMBL" id="CP000647">
    <property type="protein sequence ID" value="ABR75521.1"/>
    <property type="molecule type" value="Genomic_DNA"/>
</dbReference>
<dbReference type="RefSeq" id="WP_011977645.1">
    <property type="nucleotide sequence ID" value="NC_009648.1"/>
</dbReference>
<dbReference type="SMR" id="A6T4K0"/>
<dbReference type="STRING" id="272620.KPN_00061"/>
<dbReference type="PaxDb" id="272620-KPN_00061"/>
<dbReference type="EnsemblBacteria" id="ABR75521">
    <property type="protein sequence ID" value="ABR75521"/>
    <property type="gene ID" value="KPN_00061"/>
</dbReference>
<dbReference type="KEGG" id="kpn:KPN_00061"/>
<dbReference type="HOGENOM" id="CLU_045663_0_0_6"/>
<dbReference type="UniPathway" id="UPA00145">
    <property type="reaction ID" value="UER00565"/>
</dbReference>
<dbReference type="Proteomes" id="UP000000265">
    <property type="component" value="Chromosome"/>
</dbReference>
<dbReference type="GO" id="GO:0005829">
    <property type="term" value="C:cytosol"/>
    <property type="evidence" value="ECO:0007669"/>
    <property type="project" value="TreeGrafter"/>
</dbReference>
<dbReference type="GO" id="GO:0008733">
    <property type="term" value="F:L-arabinose isomerase activity"/>
    <property type="evidence" value="ECO:0007669"/>
    <property type="project" value="UniProtKB-UniRule"/>
</dbReference>
<dbReference type="GO" id="GO:0030145">
    <property type="term" value="F:manganese ion binding"/>
    <property type="evidence" value="ECO:0007669"/>
    <property type="project" value="UniProtKB-UniRule"/>
</dbReference>
<dbReference type="GO" id="GO:0019569">
    <property type="term" value="P:L-arabinose catabolic process to xylulose 5-phosphate"/>
    <property type="evidence" value="ECO:0007669"/>
    <property type="project" value="UniProtKB-UniRule"/>
</dbReference>
<dbReference type="CDD" id="cd03557">
    <property type="entry name" value="L-arabinose_isomerase"/>
    <property type="match status" value="1"/>
</dbReference>
<dbReference type="FunFam" id="3.40.50.10940:FF:000001">
    <property type="entry name" value="L-arabinose isomerase"/>
    <property type="match status" value="1"/>
</dbReference>
<dbReference type="Gene3D" id="3.40.50.10940">
    <property type="match status" value="1"/>
</dbReference>
<dbReference type="HAMAP" id="MF_00519">
    <property type="entry name" value="Arabinose_Isome"/>
    <property type="match status" value="1"/>
</dbReference>
<dbReference type="InterPro" id="IPR024664">
    <property type="entry name" value="Ara_Isoase_C"/>
</dbReference>
<dbReference type="InterPro" id="IPR055390">
    <property type="entry name" value="AraA_central"/>
</dbReference>
<dbReference type="InterPro" id="IPR055389">
    <property type="entry name" value="AraA_N"/>
</dbReference>
<dbReference type="InterPro" id="IPR038583">
    <property type="entry name" value="AraA_N_sf"/>
</dbReference>
<dbReference type="InterPro" id="IPR004216">
    <property type="entry name" value="Fuc/Ara_isomerase_C"/>
</dbReference>
<dbReference type="InterPro" id="IPR009015">
    <property type="entry name" value="Fucose_isomerase_N/cen_sf"/>
</dbReference>
<dbReference type="InterPro" id="IPR003762">
    <property type="entry name" value="Lara_isomerase"/>
</dbReference>
<dbReference type="NCBIfam" id="NF002795">
    <property type="entry name" value="PRK02929.1"/>
    <property type="match status" value="1"/>
</dbReference>
<dbReference type="PANTHER" id="PTHR38464">
    <property type="entry name" value="L-ARABINOSE ISOMERASE"/>
    <property type="match status" value="1"/>
</dbReference>
<dbReference type="PANTHER" id="PTHR38464:SF1">
    <property type="entry name" value="L-ARABINOSE ISOMERASE"/>
    <property type="match status" value="1"/>
</dbReference>
<dbReference type="Pfam" id="PF24856">
    <property type="entry name" value="AraA_central"/>
    <property type="match status" value="1"/>
</dbReference>
<dbReference type="Pfam" id="PF02610">
    <property type="entry name" value="AraA_N"/>
    <property type="match status" value="1"/>
</dbReference>
<dbReference type="Pfam" id="PF11762">
    <property type="entry name" value="Arabinose_Iso_C"/>
    <property type="match status" value="1"/>
</dbReference>
<dbReference type="PIRSF" id="PIRSF001478">
    <property type="entry name" value="L-ara_isomerase"/>
    <property type="match status" value="1"/>
</dbReference>
<dbReference type="SUPFAM" id="SSF50443">
    <property type="entry name" value="FucI/AraA C-terminal domain-like"/>
    <property type="match status" value="1"/>
</dbReference>
<dbReference type="SUPFAM" id="SSF53743">
    <property type="entry name" value="FucI/AraA N-terminal and middle domains"/>
    <property type="match status" value="1"/>
</dbReference>
<reference key="1">
    <citation type="submission" date="2006-09" db="EMBL/GenBank/DDBJ databases">
        <authorList>
            <consortium name="The Klebsiella pneumonia Genome Sequencing Project"/>
            <person name="McClelland M."/>
            <person name="Sanderson E.K."/>
            <person name="Spieth J."/>
            <person name="Clifton W.S."/>
            <person name="Latreille P."/>
            <person name="Sabo A."/>
            <person name="Pepin K."/>
            <person name="Bhonagiri V."/>
            <person name="Porwollik S."/>
            <person name="Ali J."/>
            <person name="Wilson R.K."/>
        </authorList>
    </citation>
    <scope>NUCLEOTIDE SEQUENCE [LARGE SCALE GENOMIC DNA]</scope>
    <source>
        <strain>ATCC 700721 / MGH 78578</strain>
    </source>
</reference>
<proteinExistence type="inferred from homology"/>
<sequence>MTIFDNYEVWFVIGSQHLYGPEALRQVTKHAEHVVNSLNAEAKLPCKLVLKPLGTTPDEITHICRDANYDDKCAGLVVWLHTFSPAKMWINGLTILNKPLLQFHTQYNAALPWDSIDMDFMNLNQTAHGGREFGFIGARMRQQHSVVTGHWQDKEAHQRIGGWMRQAVSKQDTRHLKVCRFGDNMREVAVTDGDKVAAQIKFGFSVNTWAVGDLVQVVNSISDGDISALVDEYESSYRLTPAAQVHGDKRQNVLDAARIELGMKRFLEQGGFHAFTTTFEDLHGLKQLPGLAVQRLMQQGYGFAGEGDWKTAALLRIMKVMSTGLQGGTSFMEDYTYHFDNGNDLVLGSHMLEVCPTIATAEKPILDVQPLGIGGKADPARLIFNTQTGPAIVASLIDLGDRFRLLVNTIETVPTPHDLPKLPVANALWKAQPDLRTASEAWIIAGGAHHTVFSHALNLDDMRQFAELHDIELTVIDNDTRLPSFKDALRWNEVYYGSKR</sequence>
<accession>A6T4K0</accession>
<gene>
    <name evidence="1" type="primary">araA</name>
    <name type="ordered locus">KPN78578_00600</name>
    <name type="ORF">KPN_00061</name>
</gene>
<keyword id="KW-0054">Arabinose catabolism</keyword>
<keyword id="KW-0119">Carbohydrate metabolism</keyword>
<keyword id="KW-0413">Isomerase</keyword>
<keyword id="KW-0464">Manganese</keyword>
<keyword id="KW-0479">Metal-binding</keyword>
<name>ARAA_KLEP7</name>
<protein>
    <recommendedName>
        <fullName evidence="1">L-arabinose isomerase</fullName>
        <ecNumber evidence="1">5.3.1.4</ecNumber>
    </recommendedName>
</protein>
<feature type="chain" id="PRO_1000050907" description="L-arabinose isomerase">
    <location>
        <begin position="1"/>
        <end position="500"/>
    </location>
</feature>
<feature type="binding site" evidence="1">
    <location>
        <position position="306"/>
    </location>
    <ligand>
        <name>Mn(2+)</name>
        <dbReference type="ChEBI" id="CHEBI:29035"/>
    </ligand>
</feature>
<feature type="binding site" evidence="1">
    <location>
        <position position="333"/>
    </location>
    <ligand>
        <name>Mn(2+)</name>
        <dbReference type="ChEBI" id="CHEBI:29035"/>
    </ligand>
</feature>
<feature type="binding site" evidence="1">
    <location>
        <position position="350"/>
    </location>
    <ligand>
        <name>Mn(2+)</name>
        <dbReference type="ChEBI" id="CHEBI:29035"/>
    </ligand>
</feature>
<feature type="binding site" evidence="1">
    <location>
        <position position="450"/>
    </location>
    <ligand>
        <name>Mn(2+)</name>
        <dbReference type="ChEBI" id="CHEBI:29035"/>
    </ligand>
</feature>
<comment type="function">
    <text evidence="1">Catalyzes the conversion of L-arabinose to L-ribulose.</text>
</comment>
<comment type="catalytic activity">
    <reaction evidence="1">
        <text>beta-L-arabinopyranose = L-ribulose</text>
        <dbReference type="Rhea" id="RHEA:14821"/>
        <dbReference type="ChEBI" id="CHEBI:16880"/>
        <dbReference type="ChEBI" id="CHEBI:40886"/>
        <dbReference type="EC" id="5.3.1.4"/>
    </reaction>
</comment>
<comment type="cofactor">
    <cofactor evidence="1">
        <name>Mn(2+)</name>
        <dbReference type="ChEBI" id="CHEBI:29035"/>
    </cofactor>
    <text evidence="1">Binds 1 Mn(2+) ion per subunit.</text>
</comment>
<comment type="pathway">
    <text evidence="1">Carbohydrate degradation; L-arabinose degradation via L-ribulose; D-xylulose 5-phosphate from L-arabinose (bacterial route): step 1/3.</text>
</comment>
<comment type="subunit">
    <text evidence="1">Homohexamer.</text>
</comment>
<comment type="similarity">
    <text evidence="1">Belongs to the arabinose isomerase family.</text>
</comment>
<evidence type="ECO:0000255" key="1">
    <source>
        <dbReference type="HAMAP-Rule" id="MF_00519"/>
    </source>
</evidence>
<organism>
    <name type="scientific">Klebsiella pneumoniae subsp. pneumoniae (strain ATCC 700721 / MGH 78578)</name>
    <dbReference type="NCBI Taxonomy" id="272620"/>
    <lineage>
        <taxon>Bacteria</taxon>
        <taxon>Pseudomonadati</taxon>
        <taxon>Pseudomonadota</taxon>
        <taxon>Gammaproteobacteria</taxon>
        <taxon>Enterobacterales</taxon>
        <taxon>Enterobacteriaceae</taxon>
        <taxon>Klebsiella/Raoultella group</taxon>
        <taxon>Klebsiella</taxon>
        <taxon>Klebsiella pneumoniae complex</taxon>
    </lineage>
</organism>